<name>C71Z6_MAIZE</name>
<keyword id="KW-0349">Heme</keyword>
<keyword id="KW-0408">Iron</keyword>
<keyword id="KW-0472">Membrane</keyword>
<keyword id="KW-0479">Metal-binding</keyword>
<keyword id="KW-0503">Monooxygenase</keyword>
<keyword id="KW-0560">Oxidoreductase</keyword>
<keyword id="KW-0611">Plant defense</keyword>
<keyword id="KW-1185">Reference proteome</keyword>
<keyword id="KW-0812">Transmembrane</keyword>
<keyword id="KW-1133">Transmembrane helix</keyword>
<accession>A0A1D6GQ67</accession>
<sequence>MEDKVLLAVAMVALIAVLSKLKSLLETKPKLNLPPGPWTLPLIGSIHHLVSSPLPYRAMRELAHKHGPLMMLWLGEVPTLVVSSPEAAQAITKTHDVTFADRHMNSTVDILTFNGNDIVFGTYGEQWRQLRKLSVLELLSVARVQSFQRIREEEVARFMRNLAASAGAGATVDLSKMISSFINDTFVRESIGSRCKHQDEYLDALHTGIRVAAELSVANLFPSSRLLQSLSTARRKAVAARDEMARILGQIIRETKEAMDWGDKASNESMISVLLRLQKEAGLPIELTDDIVMALMFDLFGAGSDTSSTTLTWCMTEMIRYPATMAKAQAEVREAFKGKTTITEDDLSRANLSYLKLVVKEALRLHCPVPLLIPRKCRETCQIMGYDIPKDTCVLVNVWAICRDSRYWEDADEFKPERFENSSLDYKGTSHEYLPFGSGRRMCPGGNLGVANMELALASLLYHFDWKLPSGQEPKDVDVWEAAGLVGRKNAGLVLHPVSRFAPVNA</sequence>
<comment type="function">
    <text evidence="3">Involved in the production of antifungal dolabralexin phytoalexins in response to biotic and abiotic stresses (PubMed:29475898). Catalyzes the epoxidation of dolabradiene at C-16, followed by hydroxylation at C-3, to yield the epoxides 15,16-epoxydolabrene (epoxydolabrene) and 3b-hydroxy-15,16-epoxydolabrene (epoxydolabranol) (PubMed:29475898).</text>
</comment>
<comment type="catalytic activity">
    <reaction evidence="3">
        <text>dolabradiene + reduced [NADPH--hemoprotein reductase] + O2 = 15,16-epoxydolabrene + oxidized [NADPH--hemoprotein reductase] + H2O + H(+)</text>
        <dbReference type="Rhea" id="RHEA:57516"/>
        <dbReference type="Rhea" id="RHEA-COMP:11964"/>
        <dbReference type="Rhea" id="RHEA-COMP:11965"/>
        <dbReference type="ChEBI" id="CHEBI:15377"/>
        <dbReference type="ChEBI" id="CHEBI:15378"/>
        <dbReference type="ChEBI" id="CHEBI:15379"/>
        <dbReference type="ChEBI" id="CHEBI:57618"/>
        <dbReference type="ChEBI" id="CHEBI:58210"/>
        <dbReference type="ChEBI" id="CHEBI:141821"/>
        <dbReference type="ChEBI" id="CHEBI:141822"/>
        <dbReference type="EC" id="1.14.14.159"/>
    </reaction>
    <physiologicalReaction direction="left-to-right" evidence="3">
        <dbReference type="Rhea" id="RHEA:57517"/>
    </physiologicalReaction>
</comment>
<comment type="catalytic activity">
    <reaction evidence="3">
        <text>15,16-epoxydolabrene + reduced [NADPH--hemoprotein reductase] + O2 = 3beta-hydroxy-15,16-epoxydolabrene + oxidized [NADPH--hemoprotein reductase] + H2O + H(+)</text>
        <dbReference type="Rhea" id="RHEA:57520"/>
        <dbReference type="Rhea" id="RHEA-COMP:11964"/>
        <dbReference type="Rhea" id="RHEA-COMP:11965"/>
        <dbReference type="ChEBI" id="CHEBI:15377"/>
        <dbReference type="ChEBI" id="CHEBI:15378"/>
        <dbReference type="ChEBI" id="CHEBI:15379"/>
        <dbReference type="ChEBI" id="CHEBI:57618"/>
        <dbReference type="ChEBI" id="CHEBI:58210"/>
        <dbReference type="ChEBI" id="CHEBI:141820"/>
        <dbReference type="ChEBI" id="CHEBI:141821"/>
        <dbReference type="EC" id="1.14.14.159"/>
    </reaction>
    <physiologicalReaction direction="left-to-right" evidence="3">
        <dbReference type="Rhea" id="RHEA:57521"/>
    </physiologicalReaction>
</comment>
<comment type="cofactor">
    <cofactor evidence="1">
        <name>heme</name>
        <dbReference type="ChEBI" id="CHEBI:30413"/>
    </cofactor>
</comment>
<comment type="subcellular location">
    <subcellularLocation>
        <location evidence="2">Membrane</location>
        <topology evidence="5">Single-pass membrane protein</topology>
    </subcellularLocation>
</comment>
<comment type="similarity">
    <text evidence="5">Belongs to the cytochrome P450 family.</text>
</comment>
<feature type="chain" id="PRO_0000447766" description="Dolabradiene monooxygenase">
    <location>
        <begin position="1"/>
        <end position="506"/>
    </location>
</feature>
<feature type="transmembrane region" description="Helical" evidence="2">
    <location>
        <begin position="5"/>
        <end position="25"/>
    </location>
</feature>
<feature type="binding site" description="axial binding residue" evidence="1">
    <location>
        <position position="443"/>
    </location>
    <ligand>
        <name>heme</name>
        <dbReference type="ChEBI" id="CHEBI:30413"/>
    </ligand>
    <ligandPart>
        <name>Fe</name>
        <dbReference type="ChEBI" id="CHEBI:18248"/>
    </ligandPart>
</feature>
<gene>
    <name evidence="4" type="primary">CYP71Z16</name>
    <name evidence="6" type="ORF">ZEAMMB73_Zm00001d014136</name>
</gene>
<protein>
    <recommendedName>
        <fullName evidence="5">Dolabradiene monooxygenase</fullName>
        <ecNumber evidence="3">1.14.14.159</ecNumber>
    </recommendedName>
    <alternativeName>
        <fullName evidence="4">Cytochrome P450 71Z16</fullName>
        <shortName evidence="4">ZmCYP71Z16</shortName>
    </alternativeName>
</protein>
<organism>
    <name type="scientific">Zea mays</name>
    <name type="common">Maize</name>
    <dbReference type="NCBI Taxonomy" id="4577"/>
    <lineage>
        <taxon>Eukaryota</taxon>
        <taxon>Viridiplantae</taxon>
        <taxon>Streptophyta</taxon>
        <taxon>Embryophyta</taxon>
        <taxon>Tracheophyta</taxon>
        <taxon>Spermatophyta</taxon>
        <taxon>Magnoliopsida</taxon>
        <taxon>Liliopsida</taxon>
        <taxon>Poales</taxon>
        <taxon>Poaceae</taxon>
        <taxon>PACMAD clade</taxon>
        <taxon>Panicoideae</taxon>
        <taxon>Andropogonodae</taxon>
        <taxon>Andropogoneae</taxon>
        <taxon>Tripsacinae</taxon>
        <taxon>Zea</taxon>
    </lineage>
</organism>
<evidence type="ECO:0000250" key="1">
    <source>
        <dbReference type="UniProtKB" id="Q96242"/>
    </source>
</evidence>
<evidence type="ECO:0000255" key="2"/>
<evidence type="ECO:0000269" key="3">
    <source>
    </source>
</evidence>
<evidence type="ECO:0000303" key="4">
    <source>
    </source>
</evidence>
<evidence type="ECO:0000305" key="5"/>
<evidence type="ECO:0000312" key="6">
    <source>
        <dbReference type="EMBL" id="AQK65314.1"/>
    </source>
</evidence>
<reference key="1">
    <citation type="journal article" date="2009" name="Science">
        <title>The B73 maize genome: complexity, diversity, and dynamics.</title>
        <authorList>
            <person name="Schnable P.S."/>
            <person name="Ware D."/>
            <person name="Fulton R.S."/>
            <person name="Stein J.C."/>
            <person name="Wei F."/>
            <person name="Pasternak S."/>
            <person name="Liang C."/>
            <person name="Zhang J."/>
            <person name="Fulton L."/>
            <person name="Graves T.A."/>
            <person name="Minx P."/>
            <person name="Reily A.D."/>
            <person name="Courtney L."/>
            <person name="Kruchowski S.S."/>
            <person name="Tomlinson C."/>
            <person name="Strong C."/>
            <person name="Delehaunty K."/>
            <person name="Fronick C."/>
            <person name="Courtney B."/>
            <person name="Rock S.M."/>
            <person name="Belter E."/>
            <person name="Du F."/>
            <person name="Kim K."/>
            <person name="Abbott R.M."/>
            <person name="Cotton M."/>
            <person name="Levy A."/>
            <person name="Marchetto P."/>
            <person name="Ochoa K."/>
            <person name="Jackson S.M."/>
            <person name="Gillam B."/>
            <person name="Chen W."/>
            <person name="Yan L."/>
            <person name="Higginbotham J."/>
            <person name="Cardenas M."/>
            <person name="Waligorski J."/>
            <person name="Applebaum E."/>
            <person name="Phelps L."/>
            <person name="Falcone J."/>
            <person name="Kanchi K."/>
            <person name="Thane T."/>
            <person name="Scimone A."/>
            <person name="Thane N."/>
            <person name="Henke J."/>
            <person name="Wang T."/>
            <person name="Ruppert J."/>
            <person name="Shah N."/>
            <person name="Rotter K."/>
            <person name="Hodges J."/>
            <person name="Ingenthron E."/>
            <person name="Cordes M."/>
            <person name="Kohlberg S."/>
            <person name="Sgro J."/>
            <person name="Delgado B."/>
            <person name="Mead K."/>
            <person name="Chinwalla A."/>
            <person name="Leonard S."/>
            <person name="Crouse K."/>
            <person name="Collura K."/>
            <person name="Kudrna D."/>
            <person name="Currie J."/>
            <person name="He R."/>
            <person name="Angelova A."/>
            <person name="Rajasekar S."/>
            <person name="Mueller T."/>
            <person name="Lomeli R."/>
            <person name="Scara G."/>
            <person name="Ko A."/>
            <person name="Delaney K."/>
            <person name="Wissotski M."/>
            <person name="Lopez G."/>
            <person name="Campos D."/>
            <person name="Braidotti M."/>
            <person name="Ashley E."/>
            <person name="Golser W."/>
            <person name="Kim H."/>
            <person name="Lee S."/>
            <person name="Lin J."/>
            <person name="Dujmic Z."/>
            <person name="Kim W."/>
            <person name="Talag J."/>
            <person name="Zuccolo A."/>
            <person name="Fan C."/>
            <person name="Sebastian A."/>
            <person name="Kramer M."/>
            <person name="Spiegel L."/>
            <person name="Nascimento L."/>
            <person name="Zutavern T."/>
            <person name="Miller B."/>
            <person name="Ambroise C."/>
            <person name="Muller S."/>
            <person name="Spooner W."/>
            <person name="Narechania A."/>
            <person name="Ren L."/>
            <person name="Wei S."/>
            <person name="Kumari S."/>
            <person name="Faga B."/>
            <person name="Levy M.J."/>
            <person name="McMahan L."/>
            <person name="Van Buren P."/>
            <person name="Vaughn M.W."/>
            <person name="Ying K."/>
            <person name="Yeh C.-T."/>
            <person name="Emrich S.J."/>
            <person name="Jia Y."/>
            <person name="Kalyanaraman A."/>
            <person name="Hsia A.-P."/>
            <person name="Barbazuk W.B."/>
            <person name="Baucom R.S."/>
            <person name="Brutnell T.P."/>
            <person name="Carpita N.C."/>
            <person name="Chaparro C."/>
            <person name="Chia J.-M."/>
            <person name="Deragon J.-M."/>
            <person name="Estill J.C."/>
            <person name="Fu Y."/>
            <person name="Jeddeloh J.A."/>
            <person name="Han Y."/>
            <person name="Lee H."/>
            <person name="Li P."/>
            <person name="Lisch D.R."/>
            <person name="Liu S."/>
            <person name="Liu Z."/>
            <person name="Nagel D.H."/>
            <person name="McCann M.C."/>
            <person name="SanMiguel P."/>
            <person name="Myers A.M."/>
            <person name="Nettleton D."/>
            <person name="Nguyen J."/>
            <person name="Penning B.W."/>
            <person name="Ponnala L."/>
            <person name="Schneider K.L."/>
            <person name="Schwartz D.C."/>
            <person name="Sharma A."/>
            <person name="Soderlund C."/>
            <person name="Springer N.M."/>
            <person name="Sun Q."/>
            <person name="Wang H."/>
            <person name="Waterman M."/>
            <person name="Westerman R."/>
            <person name="Wolfgruber T.K."/>
            <person name="Yang L."/>
            <person name="Yu Y."/>
            <person name="Zhang L."/>
            <person name="Zhou S."/>
            <person name="Zhu Q."/>
            <person name="Bennetzen J.L."/>
            <person name="Dawe R.K."/>
            <person name="Jiang J."/>
            <person name="Jiang N."/>
            <person name="Presting G.G."/>
            <person name="Wessler S.R."/>
            <person name="Aluru S."/>
            <person name="Martienssen R.A."/>
            <person name="Clifton S.W."/>
            <person name="McCombie W.R."/>
            <person name="Wing R.A."/>
            <person name="Wilson R.K."/>
        </authorList>
    </citation>
    <scope>NUCLEOTIDE SEQUENCE [LARGE SCALE GENOMIC DNA]</scope>
    <source>
        <strain>cv. B73</strain>
    </source>
</reference>
<reference key="2">
    <citation type="journal article" date="2018" name="Plant Physiol.">
        <title>Discovery, biosynthesis and stress-related accumulation of dolabradiene-derived defenses in maize.</title>
        <authorList>
            <person name="Mafu S."/>
            <person name="Ding Y."/>
            <person name="Murphy K.M."/>
            <person name="Yaacoobi O."/>
            <person name="Addison J.B."/>
            <person name="Wang Q."/>
            <person name="Shen Z."/>
            <person name="Briggs S.P."/>
            <person name="Bohlmann J."/>
            <person name="Castro-Falcon G."/>
            <person name="Hughes C.C."/>
            <person name="Betsiashvili M."/>
            <person name="Huffaker A."/>
            <person name="Schmelz E.A."/>
            <person name="Zerbe P."/>
        </authorList>
    </citation>
    <scope>FUNCTION</scope>
    <scope>CATALYTIC ACTIVITY</scope>
</reference>
<dbReference type="EC" id="1.14.14.159" evidence="3"/>
<dbReference type="EMBL" id="CM000781">
    <property type="protein sequence ID" value="AQK65314.1"/>
    <property type="molecule type" value="Genomic_DNA"/>
</dbReference>
<dbReference type="SMR" id="A0A1D6GQ67"/>
<dbReference type="FunCoup" id="A0A1D6GQ67">
    <property type="interactions" value="369"/>
</dbReference>
<dbReference type="STRING" id="4577.A0A1D6GQ67"/>
<dbReference type="PaxDb" id="4577-GRMZM2G067591_P01"/>
<dbReference type="EnsemblPlants" id="Zm00001eb222680_T001">
    <property type="protein sequence ID" value="Zm00001eb222680_P001"/>
    <property type="gene ID" value="Zm00001eb222680"/>
</dbReference>
<dbReference type="Gramene" id="Zm00001eb222680_T001">
    <property type="protein sequence ID" value="Zm00001eb222680_P001"/>
    <property type="gene ID" value="Zm00001eb222680"/>
</dbReference>
<dbReference type="eggNOG" id="KOG0156">
    <property type="taxonomic scope" value="Eukaryota"/>
</dbReference>
<dbReference type="InParanoid" id="A0A1D6GQ67"/>
<dbReference type="OMA" id="RFELKCH"/>
<dbReference type="OrthoDB" id="620821at2759"/>
<dbReference type="BioCyc" id="MetaCyc:MONOMER-20517"/>
<dbReference type="Proteomes" id="UP000007305">
    <property type="component" value="Chromosome 5"/>
</dbReference>
<dbReference type="ExpressionAtlas" id="A0A1D6GQ67">
    <property type="expression patterns" value="baseline"/>
</dbReference>
<dbReference type="GO" id="GO:0016020">
    <property type="term" value="C:membrane"/>
    <property type="evidence" value="ECO:0007669"/>
    <property type="project" value="UniProtKB-SubCell"/>
</dbReference>
<dbReference type="GO" id="GO:0020037">
    <property type="term" value="F:heme binding"/>
    <property type="evidence" value="ECO:0007669"/>
    <property type="project" value="InterPro"/>
</dbReference>
<dbReference type="GO" id="GO:0005506">
    <property type="term" value="F:iron ion binding"/>
    <property type="evidence" value="ECO:0007669"/>
    <property type="project" value="InterPro"/>
</dbReference>
<dbReference type="GO" id="GO:0016709">
    <property type="term" value="F:oxidoreductase activity, acting on paired donors, with incorporation or reduction of molecular oxygen, NAD(P)H as one donor, and incorporation of one atom of oxygen"/>
    <property type="evidence" value="ECO:0000314"/>
    <property type="project" value="UniProtKB"/>
</dbReference>
<dbReference type="GO" id="GO:0010333">
    <property type="term" value="F:terpene synthase activity"/>
    <property type="evidence" value="ECO:0000314"/>
    <property type="project" value="UniProtKB"/>
</dbReference>
<dbReference type="GO" id="GO:0006952">
    <property type="term" value="P:defense response"/>
    <property type="evidence" value="ECO:0007669"/>
    <property type="project" value="UniProtKB-KW"/>
</dbReference>
<dbReference type="GO" id="GO:0051502">
    <property type="term" value="P:diterpene phytoalexin biosynthetic process"/>
    <property type="evidence" value="ECO:0000314"/>
    <property type="project" value="UniProtKB"/>
</dbReference>
<dbReference type="CDD" id="cd11072">
    <property type="entry name" value="CYP71-like"/>
    <property type="match status" value="1"/>
</dbReference>
<dbReference type="FunFam" id="1.10.630.10:FF:000008">
    <property type="entry name" value="Cytochrome P450 71D8"/>
    <property type="match status" value="1"/>
</dbReference>
<dbReference type="Gene3D" id="1.10.630.10">
    <property type="entry name" value="Cytochrome P450"/>
    <property type="match status" value="1"/>
</dbReference>
<dbReference type="InterPro" id="IPR001128">
    <property type="entry name" value="Cyt_P450"/>
</dbReference>
<dbReference type="InterPro" id="IPR017972">
    <property type="entry name" value="Cyt_P450_CS"/>
</dbReference>
<dbReference type="InterPro" id="IPR002401">
    <property type="entry name" value="Cyt_P450_E_grp-I"/>
</dbReference>
<dbReference type="InterPro" id="IPR036396">
    <property type="entry name" value="Cyt_P450_sf"/>
</dbReference>
<dbReference type="PANTHER" id="PTHR47955:SF11">
    <property type="entry name" value="4-HYDROXYPHENYLACETALDEHYDE OXIME MONOOXYGENASE"/>
    <property type="match status" value="1"/>
</dbReference>
<dbReference type="PANTHER" id="PTHR47955">
    <property type="entry name" value="CYTOCHROME P450 FAMILY 71 PROTEIN"/>
    <property type="match status" value="1"/>
</dbReference>
<dbReference type="Pfam" id="PF00067">
    <property type="entry name" value="p450"/>
    <property type="match status" value="1"/>
</dbReference>
<dbReference type="PRINTS" id="PR00463">
    <property type="entry name" value="EP450I"/>
</dbReference>
<dbReference type="PRINTS" id="PR00385">
    <property type="entry name" value="P450"/>
</dbReference>
<dbReference type="SUPFAM" id="SSF48264">
    <property type="entry name" value="Cytochrome P450"/>
    <property type="match status" value="1"/>
</dbReference>
<dbReference type="PROSITE" id="PS00086">
    <property type="entry name" value="CYTOCHROME_P450"/>
    <property type="match status" value="1"/>
</dbReference>
<proteinExistence type="evidence at protein level"/>